<reference key="1">
    <citation type="journal article" date="2007" name="PLoS Biol.">
        <title>Evolution of symbiotic bacteria in the distal human intestine.</title>
        <authorList>
            <person name="Xu J."/>
            <person name="Mahowald M.A."/>
            <person name="Ley R.E."/>
            <person name="Lozupone C.A."/>
            <person name="Hamady M."/>
            <person name="Martens E.C."/>
            <person name="Henrissat B."/>
            <person name="Coutinho P.M."/>
            <person name="Minx P."/>
            <person name="Latreille P."/>
            <person name="Cordum H."/>
            <person name="Van Brunt A."/>
            <person name="Kim K."/>
            <person name="Fulton R.S."/>
            <person name="Fulton L.A."/>
            <person name="Clifton S.W."/>
            <person name="Wilson R.K."/>
            <person name="Knight R.D."/>
            <person name="Gordon J.I."/>
        </authorList>
    </citation>
    <scope>NUCLEOTIDE SEQUENCE [LARGE SCALE GENOMIC DNA]</scope>
    <source>
        <strain>ATCC 8503 / DSM 20701 / CIP 104284 / JCM 5825 / NCTC 11152</strain>
    </source>
</reference>
<dbReference type="EC" id="4.1.99.12" evidence="1"/>
<dbReference type="EC" id="3.5.4.25" evidence="1"/>
<dbReference type="EMBL" id="CP000140">
    <property type="protein sequence ID" value="ABR45194.1"/>
    <property type="molecule type" value="Genomic_DNA"/>
</dbReference>
<dbReference type="RefSeq" id="WP_005859476.1">
    <property type="nucleotide sequence ID" value="NZ_LR215978.1"/>
</dbReference>
<dbReference type="SMR" id="A6LHN0"/>
<dbReference type="STRING" id="435591.BDI_3492"/>
<dbReference type="PaxDb" id="435591-BDI_3492"/>
<dbReference type="KEGG" id="pdi:BDI_3492"/>
<dbReference type="eggNOG" id="COG0108">
    <property type="taxonomic scope" value="Bacteria"/>
</dbReference>
<dbReference type="eggNOG" id="COG0807">
    <property type="taxonomic scope" value="Bacteria"/>
</dbReference>
<dbReference type="HOGENOM" id="CLU_020273_1_2_10"/>
<dbReference type="BioCyc" id="PDIS435591:G1G5A-3582-MONOMER"/>
<dbReference type="UniPathway" id="UPA00275">
    <property type="reaction ID" value="UER00399"/>
</dbReference>
<dbReference type="UniPathway" id="UPA00275">
    <property type="reaction ID" value="UER00400"/>
</dbReference>
<dbReference type="Proteomes" id="UP000000566">
    <property type="component" value="Chromosome"/>
</dbReference>
<dbReference type="GO" id="GO:0005829">
    <property type="term" value="C:cytosol"/>
    <property type="evidence" value="ECO:0007669"/>
    <property type="project" value="TreeGrafter"/>
</dbReference>
<dbReference type="GO" id="GO:0008686">
    <property type="term" value="F:3,4-dihydroxy-2-butanone-4-phosphate synthase activity"/>
    <property type="evidence" value="ECO:0007669"/>
    <property type="project" value="UniProtKB-UniRule"/>
</dbReference>
<dbReference type="GO" id="GO:0005525">
    <property type="term" value="F:GTP binding"/>
    <property type="evidence" value="ECO:0007669"/>
    <property type="project" value="UniProtKB-KW"/>
</dbReference>
<dbReference type="GO" id="GO:0003935">
    <property type="term" value="F:GTP cyclohydrolase II activity"/>
    <property type="evidence" value="ECO:0007669"/>
    <property type="project" value="UniProtKB-UniRule"/>
</dbReference>
<dbReference type="GO" id="GO:0000287">
    <property type="term" value="F:magnesium ion binding"/>
    <property type="evidence" value="ECO:0007669"/>
    <property type="project" value="UniProtKB-UniRule"/>
</dbReference>
<dbReference type="GO" id="GO:0030145">
    <property type="term" value="F:manganese ion binding"/>
    <property type="evidence" value="ECO:0007669"/>
    <property type="project" value="UniProtKB-UniRule"/>
</dbReference>
<dbReference type="GO" id="GO:0008270">
    <property type="term" value="F:zinc ion binding"/>
    <property type="evidence" value="ECO:0007669"/>
    <property type="project" value="UniProtKB-UniRule"/>
</dbReference>
<dbReference type="GO" id="GO:0009231">
    <property type="term" value="P:riboflavin biosynthetic process"/>
    <property type="evidence" value="ECO:0007669"/>
    <property type="project" value="UniProtKB-UniRule"/>
</dbReference>
<dbReference type="CDD" id="cd00641">
    <property type="entry name" value="GTP_cyclohydro2"/>
    <property type="match status" value="1"/>
</dbReference>
<dbReference type="FunFam" id="3.40.50.10990:FF:000001">
    <property type="entry name" value="Riboflavin biosynthesis protein RibBA"/>
    <property type="match status" value="1"/>
</dbReference>
<dbReference type="FunFam" id="3.90.870.10:FF:000001">
    <property type="entry name" value="Riboflavin biosynthesis protein RibBA"/>
    <property type="match status" value="1"/>
</dbReference>
<dbReference type="Gene3D" id="3.90.870.10">
    <property type="entry name" value="DHBP synthase"/>
    <property type="match status" value="1"/>
</dbReference>
<dbReference type="Gene3D" id="3.40.50.10990">
    <property type="entry name" value="GTP cyclohydrolase II"/>
    <property type="match status" value="1"/>
</dbReference>
<dbReference type="HAMAP" id="MF_00179">
    <property type="entry name" value="RibA"/>
    <property type="match status" value="1"/>
</dbReference>
<dbReference type="HAMAP" id="MF_00180">
    <property type="entry name" value="RibB"/>
    <property type="match status" value="1"/>
</dbReference>
<dbReference type="HAMAP" id="MF_01283">
    <property type="entry name" value="RibBA"/>
    <property type="match status" value="1"/>
</dbReference>
<dbReference type="InterPro" id="IPR017945">
    <property type="entry name" value="DHBP_synth_RibB-like_a/b_dom"/>
</dbReference>
<dbReference type="InterPro" id="IPR000422">
    <property type="entry name" value="DHBP_synthase_RibB"/>
</dbReference>
<dbReference type="InterPro" id="IPR032677">
    <property type="entry name" value="GTP_cyclohydro_II"/>
</dbReference>
<dbReference type="InterPro" id="IPR000926">
    <property type="entry name" value="RibA"/>
</dbReference>
<dbReference type="InterPro" id="IPR036144">
    <property type="entry name" value="RibA-like_sf"/>
</dbReference>
<dbReference type="InterPro" id="IPR016299">
    <property type="entry name" value="Riboflavin_synth_RibBA"/>
</dbReference>
<dbReference type="NCBIfam" id="NF001591">
    <property type="entry name" value="PRK00393.1"/>
    <property type="match status" value="1"/>
</dbReference>
<dbReference type="NCBIfam" id="NF006803">
    <property type="entry name" value="PRK09311.1"/>
    <property type="match status" value="1"/>
</dbReference>
<dbReference type="NCBIfam" id="TIGR00505">
    <property type="entry name" value="ribA"/>
    <property type="match status" value="1"/>
</dbReference>
<dbReference type="NCBIfam" id="TIGR00506">
    <property type="entry name" value="ribB"/>
    <property type="match status" value="1"/>
</dbReference>
<dbReference type="PANTHER" id="PTHR21327:SF18">
    <property type="entry name" value="3,4-DIHYDROXY-2-BUTANONE 4-PHOSPHATE SYNTHASE"/>
    <property type="match status" value="1"/>
</dbReference>
<dbReference type="PANTHER" id="PTHR21327">
    <property type="entry name" value="GTP CYCLOHYDROLASE II-RELATED"/>
    <property type="match status" value="1"/>
</dbReference>
<dbReference type="Pfam" id="PF00926">
    <property type="entry name" value="DHBP_synthase"/>
    <property type="match status" value="1"/>
</dbReference>
<dbReference type="Pfam" id="PF00925">
    <property type="entry name" value="GTP_cyclohydro2"/>
    <property type="match status" value="1"/>
</dbReference>
<dbReference type="PIRSF" id="PIRSF001259">
    <property type="entry name" value="RibA"/>
    <property type="match status" value="1"/>
</dbReference>
<dbReference type="SUPFAM" id="SSF142695">
    <property type="entry name" value="RibA-like"/>
    <property type="match status" value="1"/>
</dbReference>
<dbReference type="SUPFAM" id="SSF55821">
    <property type="entry name" value="YrdC/RibB"/>
    <property type="match status" value="1"/>
</dbReference>
<organism>
    <name type="scientific">Parabacteroides distasonis (strain ATCC 8503 / DSM 20701 / CIP 104284 / JCM 5825 / NCTC 11152)</name>
    <dbReference type="NCBI Taxonomy" id="435591"/>
    <lineage>
        <taxon>Bacteria</taxon>
        <taxon>Pseudomonadati</taxon>
        <taxon>Bacteroidota</taxon>
        <taxon>Bacteroidia</taxon>
        <taxon>Bacteroidales</taxon>
        <taxon>Tannerellaceae</taxon>
        <taxon>Parabacteroides</taxon>
    </lineage>
</organism>
<name>RIBBA_PARD8</name>
<sequence>MSEIQLNTIEEAIEDFREGKFLIVVDDEDRENEGDFIIAAEKVTPEKINFMLKNGRGVLCAPITEERCQELELDMQVANNTSLLGTPFTITVDKLGGKCTTGVSMYDRAETILALADPKTKPSDLGRPGHINPLRARSRGVLRRAGHTEAAVDLARLAGLYPAGALIEIINEDGTMARLPQLIEVAKKFDIKIICIKDLIAYRLRTESIVENGVEVDLPTEYGHFRLIPFRQKSNGLEHIALIKGKFEKDEPILVRVHSSCATGDIFGSMRCECGEQLHEAMRRIDQEGKGVIVYLNQEGRGIGLMEKMKAYKLQEDGLDTVDANLHLGHQADERDYGVGAQILRHIGVTKMRLMSNNPVKRVGLEAYGLEVVENVPIEVKPNPYNEFYMKTKKERMGHVLHNIK</sequence>
<feature type="chain" id="PRO_1000165253" description="Riboflavin biosynthesis protein RibBA">
    <location>
        <begin position="1"/>
        <end position="405"/>
    </location>
</feature>
<feature type="region of interest" description="DHBP synthase">
    <location>
        <begin position="1"/>
        <end position="205"/>
    </location>
</feature>
<feature type="region of interest" description="GTP cyclohydrolase II">
    <location>
        <begin position="206"/>
        <end position="405"/>
    </location>
</feature>
<feature type="active site" description="Proton acceptor; for GTP cyclohydrolase activity" evidence="1">
    <location>
        <position position="333"/>
    </location>
</feature>
<feature type="active site" description="Nucleophile; for GTP cyclohydrolase activity" evidence="1">
    <location>
        <position position="335"/>
    </location>
</feature>
<feature type="binding site" evidence="1">
    <location>
        <begin position="30"/>
        <end position="31"/>
    </location>
    <ligand>
        <name>D-ribulose 5-phosphate</name>
        <dbReference type="ChEBI" id="CHEBI:58121"/>
    </ligand>
</feature>
<feature type="binding site" evidence="1">
    <location>
        <position position="31"/>
    </location>
    <ligand>
        <name>Mg(2+)</name>
        <dbReference type="ChEBI" id="CHEBI:18420"/>
        <label>1</label>
    </ligand>
</feature>
<feature type="binding site" evidence="1">
    <location>
        <position position="31"/>
    </location>
    <ligand>
        <name>Mg(2+)</name>
        <dbReference type="ChEBI" id="CHEBI:18420"/>
        <label>2</label>
    </ligand>
</feature>
<feature type="binding site" evidence="1">
    <location>
        <position position="35"/>
    </location>
    <ligand>
        <name>D-ribulose 5-phosphate</name>
        <dbReference type="ChEBI" id="CHEBI:58121"/>
    </ligand>
</feature>
<feature type="binding site" evidence="1">
    <location>
        <begin position="144"/>
        <end position="148"/>
    </location>
    <ligand>
        <name>D-ribulose 5-phosphate</name>
        <dbReference type="ChEBI" id="CHEBI:58121"/>
    </ligand>
</feature>
<feature type="binding site" evidence="1">
    <location>
        <position position="147"/>
    </location>
    <ligand>
        <name>Mg(2+)</name>
        <dbReference type="ChEBI" id="CHEBI:18420"/>
        <label>2</label>
    </ligand>
</feature>
<feature type="binding site" evidence="1">
    <location>
        <position position="168"/>
    </location>
    <ligand>
        <name>D-ribulose 5-phosphate</name>
        <dbReference type="ChEBI" id="CHEBI:58121"/>
    </ligand>
</feature>
<feature type="binding site" evidence="1">
    <location>
        <begin position="256"/>
        <end position="260"/>
    </location>
    <ligand>
        <name>GTP</name>
        <dbReference type="ChEBI" id="CHEBI:37565"/>
    </ligand>
</feature>
<feature type="binding site" evidence="1">
    <location>
        <position position="261"/>
    </location>
    <ligand>
        <name>Zn(2+)</name>
        <dbReference type="ChEBI" id="CHEBI:29105"/>
        <note>catalytic</note>
    </ligand>
</feature>
<feature type="binding site" evidence="1">
    <location>
        <position position="272"/>
    </location>
    <ligand>
        <name>Zn(2+)</name>
        <dbReference type="ChEBI" id="CHEBI:29105"/>
        <note>catalytic</note>
    </ligand>
</feature>
<feature type="binding site" evidence="1">
    <location>
        <position position="274"/>
    </location>
    <ligand>
        <name>Zn(2+)</name>
        <dbReference type="ChEBI" id="CHEBI:29105"/>
        <note>catalytic</note>
    </ligand>
</feature>
<feature type="binding site" evidence="1">
    <location>
        <position position="277"/>
    </location>
    <ligand>
        <name>GTP</name>
        <dbReference type="ChEBI" id="CHEBI:37565"/>
    </ligand>
</feature>
<feature type="binding site" evidence="1">
    <location>
        <begin position="299"/>
        <end position="301"/>
    </location>
    <ligand>
        <name>GTP</name>
        <dbReference type="ChEBI" id="CHEBI:37565"/>
    </ligand>
</feature>
<feature type="binding site" evidence="1">
    <location>
        <position position="321"/>
    </location>
    <ligand>
        <name>GTP</name>
        <dbReference type="ChEBI" id="CHEBI:37565"/>
    </ligand>
</feature>
<feature type="binding site" evidence="1">
    <location>
        <position position="356"/>
    </location>
    <ligand>
        <name>GTP</name>
        <dbReference type="ChEBI" id="CHEBI:37565"/>
    </ligand>
</feature>
<feature type="binding site" evidence="1">
    <location>
        <position position="361"/>
    </location>
    <ligand>
        <name>GTP</name>
        <dbReference type="ChEBI" id="CHEBI:37565"/>
    </ligand>
</feature>
<feature type="site" description="Essential for DHBP synthase activity" evidence="1">
    <location>
        <position position="130"/>
    </location>
</feature>
<feature type="site" description="Essential for DHBP synthase activity" evidence="1">
    <location>
        <position position="168"/>
    </location>
</feature>
<protein>
    <recommendedName>
        <fullName evidence="1">Riboflavin biosynthesis protein RibBA</fullName>
    </recommendedName>
    <domain>
        <recommendedName>
            <fullName evidence="1">3,4-dihydroxy-2-butanone 4-phosphate synthase</fullName>
            <shortName evidence="1">DHBP synthase</shortName>
            <ecNumber evidence="1">4.1.99.12</ecNumber>
        </recommendedName>
    </domain>
    <domain>
        <recommendedName>
            <fullName evidence="1">GTP cyclohydrolase-2</fullName>
            <ecNumber evidence="1">3.5.4.25</ecNumber>
        </recommendedName>
        <alternativeName>
            <fullName evidence="1">GTP cyclohydrolase II</fullName>
        </alternativeName>
    </domain>
</protein>
<accession>A6LHN0</accession>
<keyword id="KW-0342">GTP-binding</keyword>
<keyword id="KW-0378">Hydrolase</keyword>
<keyword id="KW-0456">Lyase</keyword>
<keyword id="KW-0460">Magnesium</keyword>
<keyword id="KW-0464">Manganese</keyword>
<keyword id="KW-0479">Metal-binding</keyword>
<keyword id="KW-0511">Multifunctional enzyme</keyword>
<keyword id="KW-0547">Nucleotide-binding</keyword>
<keyword id="KW-1185">Reference proteome</keyword>
<keyword id="KW-0686">Riboflavin biosynthesis</keyword>
<keyword id="KW-0862">Zinc</keyword>
<evidence type="ECO:0000255" key="1">
    <source>
        <dbReference type="HAMAP-Rule" id="MF_01283"/>
    </source>
</evidence>
<gene>
    <name evidence="1" type="primary">ribBA</name>
    <name type="ordered locus">BDI_3492</name>
</gene>
<comment type="function">
    <text evidence="1">Catalyzes the conversion of D-ribulose 5-phosphate to formate and 3,4-dihydroxy-2-butanone 4-phosphate.</text>
</comment>
<comment type="function">
    <text evidence="1">Catalyzes the conversion of GTP to 2,5-diamino-6-ribosylamino-4(3H)-pyrimidinone 5'-phosphate (DARP), formate and pyrophosphate.</text>
</comment>
<comment type="catalytic activity">
    <reaction evidence="1">
        <text>D-ribulose 5-phosphate = (2S)-2-hydroxy-3-oxobutyl phosphate + formate + H(+)</text>
        <dbReference type="Rhea" id="RHEA:18457"/>
        <dbReference type="ChEBI" id="CHEBI:15378"/>
        <dbReference type="ChEBI" id="CHEBI:15740"/>
        <dbReference type="ChEBI" id="CHEBI:58121"/>
        <dbReference type="ChEBI" id="CHEBI:58830"/>
        <dbReference type="EC" id="4.1.99.12"/>
    </reaction>
</comment>
<comment type="catalytic activity">
    <reaction evidence="1">
        <text>GTP + 4 H2O = 2,5-diamino-6-hydroxy-4-(5-phosphoribosylamino)-pyrimidine + formate + 2 phosphate + 3 H(+)</text>
        <dbReference type="Rhea" id="RHEA:23704"/>
        <dbReference type="ChEBI" id="CHEBI:15377"/>
        <dbReference type="ChEBI" id="CHEBI:15378"/>
        <dbReference type="ChEBI" id="CHEBI:15740"/>
        <dbReference type="ChEBI" id="CHEBI:37565"/>
        <dbReference type="ChEBI" id="CHEBI:43474"/>
        <dbReference type="ChEBI" id="CHEBI:58614"/>
        <dbReference type="EC" id="3.5.4.25"/>
    </reaction>
</comment>
<comment type="cofactor">
    <cofactor evidence="1">
        <name>Mg(2+)</name>
        <dbReference type="ChEBI" id="CHEBI:18420"/>
    </cofactor>
    <cofactor evidence="1">
        <name>Mn(2+)</name>
        <dbReference type="ChEBI" id="CHEBI:29035"/>
    </cofactor>
    <text evidence="1">Binds 2 divalent metal cations per subunit. Magnesium or manganese.</text>
</comment>
<comment type="cofactor">
    <cofactor evidence="1">
        <name>Zn(2+)</name>
        <dbReference type="ChEBI" id="CHEBI:29105"/>
    </cofactor>
    <text evidence="1">Binds 1 zinc ion per subunit.</text>
</comment>
<comment type="pathway">
    <text evidence="1">Cofactor biosynthesis; riboflavin biosynthesis; 2-hydroxy-3-oxobutyl phosphate from D-ribulose 5-phosphate: step 1/1.</text>
</comment>
<comment type="pathway">
    <text evidence="1">Cofactor biosynthesis; riboflavin biosynthesis; 5-amino-6-(D-ribitylamino)uracil from GTP: step 1/4.</text>
</comment>
<comment type="similarity">
    <text evidence="1">In the N-terminal section; belongs to the DHBP synthase family.</text>
</comment>
<comment type="similarity">
    <text evidence="1">In the C-terminal section; belongs to the GTP cyclohydrolase II family.</text>
</comment>
<proteinExistence type="inferred from homology"/>